<comment type="function">
    <text>Involved in gametogenesis and steroidogenesis.</text>
</comment>
<comment type="subunit">
    <text>Heterodimer of an alpha and a beta chain.</text>
</comment>
<comment type="subcellular location">
    <subcellularLocation>
        <location>Secreted</location>
    </subcellularLocation>
</comment>
<comment type="similarity">
    <text evidence="3">Belongs to the glycoprotein hormones subunit beta family.</text>
</comment>
<organism>
    <name type="scientific">Acanthopagrus latus</name>
    <name type="common">Yellowfin seabream</name>
    <name type="synonym">Sparus latus</name>
    <dbReference type="NCBI Taxonomy" id="8177"/>
    <lineage>
        <taxon>Eukaryota</taxon>
        <taxon>Metazoa</taxon>
        <taxon>Chordata</taxon>
        <taxon>Craniata</taxon>
        <taxon>Vertebrata</taxon>
        <taxon>Euteleostomi</taxon>
        <taxon>Actinopterygii</taxon>
        <taxon>Neopterygii</taxon>
        <taxon>Teleostei</taxon>
        <taxon>Neoteleostei</taxon>
        <taxon>Acanthomorphata</taxon>
        <taxon>Eupercaria</taxon>
        <taxon>Spariformes</taxon>
        <taxon>Sparidae</taxon>
        <taxon>Acanthopagrus</taxon>
    </lineage>
</organism>
<reference key="1">
    <citation type="submission" date="1994-01" db="EMBL/GenBank/DDBJ databases">
        <title>Molecular cloning and sequencing of yellowfin porgy gonadotropin beta-subunit cDNA.</title>
        <authorList>
            <person name="Tsai H.J."/>
            <person name="Yang L.T."/>
        </authorList>
    </citation>
    <scope>NUCLEOTIDE SEQUENCE [MRNA]</scope>
</reference>
<name>GTHB2_ACALA</name>
<keyword id="KW-1015">Disulfide bond</keyword>
<keyword id="KW-0325">Glycoprotein</keyword>
<keyword id="KW-0372">Hormone</keyword>
<keyword id="KW-0964">Secreted</keyword>
<keyword id="KW-0732">Signal</keyword>
<evidence type="ECO:0000250" key="1"/>
<evidence type="ECO:0000255" key="2"/>
<evidence type="ECO:0000305" key="3"/>
<protein>
    <recommendedName>
        <fullName>Gonadotropin subunit beta-2</fullName>
    </recommendedName>
    <alternativeName>
        <fullName>GTH-II-beta</fullName>
    </alternativeName>
    <alternativeName>
        <fullName>Gonadotropin beta-II chain</fullName>
    </alternativeName>
</protein>
<sequence length="137" mass="15330">MLPFMLSSFLGASPSIWPLAPAEAFQLPPCQLINQTVSLEKEGCPKCHPVETTICSGHCITKDPVMKTRYVYQHVCTYRDLHYKTFELPDCPLGVDPTVTYPVAVSCNCGLCAMDTSDCTFESLQPNFCMNDIPFYY</sequence>
<accession>Q90225</accession>
<dbReference type="EMBL" id="L11722">
    <property type="protein sequence ID" value="AAA48512.1"/>
    <property type="molecule type" value="mRNA"/>
</dbReference>
<dbReference type="SMR" id="Q90225"/>
<dbReference type="GlyCosmos" id="Q90225">
    <property type="glycosylation" value="1 site, No reported glycans"/>
</dbReference>
<dbReference type="GO" id="GO:0005737">
    <property type="term" value="C:cytoplasm"/>
    <property type="evidence" value="ECO:0007669"/>
    <property type="project" value="TreeGrafter"/>
</dbReference>
<dbReference type="GO" id="GO:0005615">
    <property type="term" value="C:extracellular space"/>
    <property type="evidence" value="ECO:0007669"/>
    <property type="project" value="TreeGrafter"/>
</dbReference>
<dbReference type="GO" id="GO:0005179">
    <property type="term" value="F:hormone activity"/>
    <property type="evidence" value="ECO:0007669"/>
    <property type="project" value="UniProtKB-KW"/>
</dbReference>
<dbReference type="GO" id="GO:0007186">
    <property type="term" value="P:G protein-coupled receptor signaling pathway"/>
    <property type="evidence" value="ECO:0007669"/>
    <property type="project" value="TreeGrafter"/>
</dbReference>
<dbReference type="GO" id="GO:0030728">
    <property type="term" value="P:ovulation"/>
    <property type="evidence" value="ECO:0007669"/>
    <property type="project" value="TreeGrafter"/>
</dbReference>
<dbReference type="CDD" id="cd00069">
    <property type="entry name" value="GHB_like"/>
    <property type="match status" value="1"/>
</dbReference>
<dbReference type="FunFam" id="2.10.90.10:FF:000007">
    <property type="entry name" value="Luteinizing hormone beta subunit"/>
    <property type="match status" value="1"/>
</dbReference>
<dbReference type="Gene3D" id="2.10.90.10">
    <property type="entry name" value="Cystine-knot cytokines"/>
    <property type="match status" value="1"/>
</dbReference>
<dbReference type="InterPro" id="IPR029034">
    <property type="entry name" value="Cystine-knot_cytokine"/>
</dbReference>
<dbReference type="InterPro" id="IPR006208">
    <property type="entry name" value="Glyco_hormone_CN"/>
</dbReference>
<dbReference type="InterPro" id="IPR001545">
    <property type="entry name" value="Gonadotropin_bsu"/>
</dbReference>
<dbReference type="InterPro" id="IPR018245">
    <property type="entry name" value="Gonadotropin_bsu_CS"/>
</dbReference>
<dbReference type="PANTHER" id="PTHR11515">
    <property type="entry name" value="GLYCOPROTEIN HORMONE BETA CHAIN"/>
    <property type="match status" value="1"/>
</dbReference>
<dbReference type="PANTHER" id="PTHR11515:SF11">
    <property type="entry name" value="LUTROPIN SUBUNIT BETA"/>
    <property type="match status" value="1"/>
</dbReference>
<dbReference type="Pfam" id="PF00007">
    <property type="entry name" value="Cys_knot"/>
    <property type="match status" value="1"/>
</dbReference>
<dbReference type="SMART" id="SM00068">
    <property type="entry name" value="GHB"/>
    <property type="match status" value="1"/>
</dbReference>
<dbReference type="SUPFAM" id="SSF57501">
    <property type="entry name" value="Cystine-knot cytokines"/>
    <property type="match status" value="1"/>
</dbReference>
<dbReference type="PROSITE" id="PS00261">
    <property type="entry name" value="GLYCO_HORMONE_BETA_1"/>
    <property type="match status" value="1"/>
</dbReference>
<dbReference type="PROSITE" id="PS00689">
    <property type="entry name" value="GLYCO_HORMONE_BETA_2"/>
    <property type="match status" value="1"/>
</dbReference>
<proteinExistence type="evidence at transcript level"/>
<feature type="signal peptide" evidence="2">
    <location>
        <begin position="1"/>
        <end position="24"/>
    </location>
</feature>
<feature type="chain" id="PRO_0000011678" description="Gonadotropin subunit beta-2">
    <location>
        <begin position="25"/>
        <end position="137"/>
    </location>
</feature>
<feature type="glycosylation site" description="N-linked (GlcNAc...) asparagine" evidence="2">
    <location>
        <position position="34"/>
    </location>
</feature>
<feature type="disulfide bond" evidence="1">
    <location>
        <begin position="30"/>
        <end position="76"/>
    </location>
</feature>
<feature type="disulfide bond" evidence="1">
    <location>
        <begin position="44"/>
        <end position="91"/>
    </location>
</feature>
<feature type="disulfide bond" evidence="1">
    <location>
        <begin position="47"/>
        <end position="129"/>
    </location>
</feature>
<feature type="disulfide bond" evidence="1">
    <location>
        <begin position="55"/>
        <end position="107"/>
    </location>
</feature>
<feature type="disulfide bond" evidence="1">
    <location>
        <begin position="59"/>
        <end position="109"/>
    </location>
</feature>
<feature type="disulfide bond" evidence="1">
    <location>
        <begin position="112"/>
        <end position="119"/>
    </location>
</feature>
<gene>
    <name type="primary">cgbb</name>
</gene>